<evidence type="ECO:0000255" key="1">
    <source>
        <dbReference type="HAMAP-Rule" id="MF_02010"/>
    </source>
</evidence>
<accession>Q57JY6</accession>
<organism>
    <name type="scientific">Salmonella choleraesuis (strain SC-B67)</name>
    <dbReference type="NCBI Taxonomy" id="321314"/>
    <lineage>
        <taxon>Bacteria</taxon>
        <taxon>Pseudomonadati</taxon>
        <taxon>Pseudomonadota</taxon>
        <taxon>Gammaproteobacteria</taxon>
        <taxon>Enterobacterales</taxon>
        <taxon>Enterobacteriaceae</taxon>
        <taxon>Salmonella</taxon>
    </lineage>
</organism>
<name>IRAD_SALCH</name>
<gene>
    <name evidence="1" type="primary">iraD</name>
    <name type="ordered locus">SCH_3070</name>
</gene>
<dbReference type="EMBL" id="AE017220">
    <property type="protein sequence ID" value="AAX66976.1"/>
    <property type="molecule type" value="Genomic_DNA"/>
</dbReference>
<dbReference type="RefSeq" id="WP_001540910.1">
    <property type="nucleotide sequence ID" value="NC_006905.1"/>
</dbReference>
<dbReference type="SMR" id="Q57JY6"/>
<dbReference type="KEGG" id="sec:SCH_3070"/>
<dbReference type="HOGENOM" id="CLU_1977621_0_0_6"/>
<dbReference type="Proteomes" id="UP000000538">
    <property type="component" value="Chromosome"/>
</dbReference>
<dbReference type="GO" id="GO:0005737">
    <property type="term" value="C:cytoplasm"/>
    <property type="evidence" value="ECO:0007669"/>
    <property type="project" value="UniProtKB-SubCell"/>
</dbReference>
<dbReference type="GO" id="GO:0043856">
    <property type="term" value="F:anti-sigma factor antagonist activity"/>
    <property type="evidence" value="ECO:0007669"/>
    <property type="project" value="InterPro"/>
</dbReference>
<dbReference type="GO" id="GO:0034599">
    <property type="term" value="P:cellular response to oxidative stress"/>
    <property type="evidence" value="ECO:0007669"/>
    <property type="project" value="UniProtKB-UniRule"/>
</dbReference>
<dbReference type="GO" id="GO:0006974">
    <property type="term" value="P:DNA damage response"/>
    <property type="evidence" value="ECO:0007669"/>
    <property type="project" value="InterPro"/>
</dbReference>
<dbReference type="HAMAP" id="MF_02010">
    <property type="entry name" value="IraD"/>
    <property type="match status" value="1"/>
</dbReference>
<dbReference type="InterPro" id="IPR023776">
    <property type="entry name" value="Anti-adapt_IraD"/>
</dbReference>
<dbReference type="InterPro" id="IPR007048">
    <property type="entry name" value="IraD/Gp25-like"/>
</dbReference>
<dbReference type="NCBIfam" id="NF010727">
    <property type="entry name" value="PRK14128.1-2"/>
    <property type="match status" value="1"/>
</dbReference>
<dbReference type="Pfam" id="PF04965">
    <property type="entry name" value="GPW_gp25"/>
    <property type="match status" value="1"/>
</dbReference>
<reference key="1">
    <citation type="journal article" date="2005" name="Nucleic Acids Res.">
        <title>The genome sequence of Salmonella enterica serovar Choleraesuis, a highly invasive and resistant zoonotic pathogen.</title>
        <authorList>
            <person name="Chiu C.-H."/>
            <person name="Tang P."/>
            <person name="Chu C."/>
            <person name="Hu S."/>
            <person name="Bao Q."/>
            <person name="Yu J."/>
            <person name="Chou Y.-Y."/>
            <person name="Wang H.-S."/>
            <person name="Lee Y.-S."/>
        </authorList>
    </citation>
    <scope>NUCLEOTIDE SEQUENCE [LARGE SCALE GENOMIC DNA]</scope>
    <source>
        <strain>SC-B67</strain>
    </source>
</reference>
<sequence>MMTPTIPVALFDRLLVEGISPHELVRRKLMCLFNSCSVPGGETLPPLLTRGMPEWHEVNVGDKRVLNWFCRELRAAILRYEPSINMLKVSVKDAHHQTLALSLEAMLQDESEPLRLEIAYSNGRWR</sequence>
<comment type="function">
    <text evidence="1">Inhibits RpoS proteolysis by regulating RssB activity, thereby increasing the stability of the sigma stress factor RpoS during oxidative stress. Its effect on RpoS stability is due to its interaction with RssB, which probably blocks the interaction of RssB with RpoS, and the consequent delivery of the RssB-RpoS complex to the ClpXP protein degradation pathway.</text>
</comment>
<comment type="subunit">
    <text evidence="1">Interacts with RssB.</text>
</comment>
<comment type="subcellular location">
    <subcellularLocation>
        <location evidence="1">Cytoplasm</location>
    </subcellularLocation>
</comment>
<comment type="similarity">
    <text evidence="1">Belongs to the GpW/Gp25 family. IraD subfamily.</text>
</comment>
<feature type="chain" id="PRO_0000337898" description="Anti-adapter protein IraD">
    <location>
        <begin position="1"/>
        <end position="126"/>
    </location>
</feature>
<keyword id="KW-0963">Cytoplasm</keyword>
<keyword id="KW-0346">Stress response</keyword>
<proteinExistence type="inferred from homology"/>
<protein>
    <recommendedName>
        <fullName evidence="1">Anti-adapter protein IraD</fullName>
    </recommendedName>
</protein>